<name>FLIE_DESHY</name>
<sequence length="114" mass="12235">MAINPIVPIHPLMLQQALNPIQENNPVEGNGPQTPAGAAKVGADFGQFLQEALQKVDNLQKEADVASLGLATGQIQDLHTAVIAMEKAGLSLSLTVDVRNRALDAYHEIMRMQI</sequence>
<accession>Q24T63</accession>
<organism>
    <name type="scientific">Desulfitobacterium hafniense (strain Y51)</name>
    <dbReference type="NCBI Taxonomy" id="138119"/>
    <lineage>
        <taxon>Bacteria</taxon>
        <taxon>Bacillati</taxon>
        <taxon>Bacillota</taxon>
        <taxon>Clostridia</taxon>
        <taxon>Eubacteriales</taxon>
        <taxon>Desulfitobacteriaceae</taxon>
        <taxon>Desulfitobacterium</taxon>
    </lineage>
</organism>
<protein>
    <recommendedName>
        <fullName evidence="1">Flagellar hook-basal body complex protein FliE</fullName>
    </recommendedName>
</protein>
<feature type="chain" id="PRO_1000148048" description="Flagellar hook-basal body complex protein FliE">
    <location>
        <begin position="1"/>
        <end position="114"/>
    </location>
</feature>
<keyword id="KW-0975">Bacterial flagellum</keyword>
<keyword id="KW-1185">Reference proteome</keyword>
<gene>
    <name evidence="1" type="primary">fliE</name>
    <name type="ordered locus">DSY2990</name>
</gene>
<comment type="subcellular location">
    <subcellularLocation>
        <location evidence="1">Bacterial flagellum basal body</location>
    </subcellularLocation>
</comment>
<comment type="similarity">
    <text evidence="1">Belongs to the FliE family.</text>
</comment>
<dbReference type="EMBL" id="AP008230">
    <property type="protein sequence ID" value="BAE84779.1"/>
    <property type="molecule type" value="Genomic_DNA"/>
</dbReference>
<dbReference type="RefSeq" id="WP_011460760.1">
    <property type="nucleotide sequence ID" value="NC_007907.1"/>
</dbReference>
<dbReference type="SMR" id="Q24T63"/>
<dbReference type="STRING" id="138119.DSY2990"/>
<dbReference type="KEGG" id="dsy:DSY2990"/>
<dbReference type="eggNOG" id="COG1677">
    <property type="taxonomic scope" value="Bacteria"/>
</dbReference>
<dbReference type="HOGENOM" id="CLU_147249_3_0_9"/>
<dbReference type="Proteomes" id="UP000001946">
    <property type="component" value="Chromosome"/>
</dbReference>
<dbReference type="GO" id="GO:0009425">
    <property type="term" value="C:bacterial-type flagellum basal body"/>
    <property type="evidence" value="ECO:0007669"/>
    <property type="project" value="UniProtKB-SubCell"/>
</dbReference>
<dbReference type="GO" id="GO:0003774">
    <property type="term" value="F:cytoskeletal motor activity"/>
    <property type="evidence" value="ECO:0007669"/>
    <property type="project" value="InterPro"/>
</dbReference>
<dbReference type="GO" id="GO:0005198">
    <property type="term" value="F:structural molecule activity"/>
    <property type="evidence" value="ECO:0007669"/>
    <property type="project" value="InterPro"/>
</dbReference>
<dbReference type="GO" id="GO:0071973">
    <property type="term" value="P:bacterial-type flagellum-dependent cell motility"/>
    <property type="evidence" value="ECO:0007669"/>
    <property type="project" value="InterPro"/>
</dbReference>
<dbReference type="HAMAP" id="MF_00724">
    <property type="entry name" value="FliE"/>
    <property type="match status" value="1"/>
</dbReference>
<dbReference type="InterPro" id="IPR001624">
    <property type="entry name" value="FliE"/>
</dbReference>
<dbReference type="NCBIfam" id="TIGR00205">
    <property type="entry name" value="fliE"/>
    <property type="match status" value="1"/>
</dbReference>
<dbReference type="PANTHER" id="PTHR34653">
    <property type="match status" value="1"/>
</dbReference>
<dbReference type="PANTHER" id="PTHR34653:SF1">
    <property type="entry name" value="FLAGELLAR HOOK-BASAL BODY COMPLEX PROTEIN FLIE"/>
    <property type="match status" value="1"/>
</dbReference>
<dbReference type="Pfam" id="PF02049">
    <property type="entry name" value="FliE"/>
    <property type="match status" value="1"/>
</dbReference>
<dbReference type="PRINTS" id="PR01006">
    <property type="entry name" value="FLGHOOKFLIE"/>
</dbReference>
<proteinExistence type="inferred from homology"/>
<evidence type="ECO:0000255" key="1">
    <source>
        <dbReference type="HAMAP-Rule" id="MF_00724"/>
    </source>
</evidence>
<reference key="1">
    <citation type="journal article" date="2006" name="J. Bacteriol.">
        <title>Complete genome sequence of the dehalorespiring bacterium Desulfitobacterium hafniense Y51 and comparison with Dehalococcoides ethenogenes 195.</title>
        <authorList>
            <person name="Nonaka H."/>
            <person name="Keresztes G."/>
            <person name="Shinoda Y."/>
            <person name="Ikenaga Y."/>
            <person name="Abe M."/>
            <person name="Naito K."/>
            <person name="Inatomi K."/>
            <person name="Furukawa K."/>
            <person name="Inui M."/>
            <person name="Yukawa H."/>
        </authorList>
    </citation>
    <scope>NUCLEOTIDE SEQUENCE [LARGE SCALE GENOMIC DNA]</scope>
    <source>
        <strain>Y51</strain>
    </source>
</reference>